<gene>
    <name evidence="1" type="primary">sepF</name>
    <name type="ordered locus">SPH_1772</name>
</gene>
<keyword id="KW-0131">Cell cycle</keyword>
<keyword id="KW-0132">Cell division</keyword>
<keyword id="KW-0963">Cytoplasm</keyword>
<keyword id="KW-0717">Septation</keyword>
<evidence type="ECO:0000255" key="1">
    <source>
        <dbReference type="HAMAP-Rule" id="MF_01197"/>
    </source>
</evidence>
<evidence type="ECO:0000256" key="2">
    <source>
        <dbReference type="SAM" id="MobiDB-lite"/>
    </source>
</evidence>
<feature type="chain" id="PRO_1000138477" description="Cell division protein SepF">
    <location>
        <begin position="1"/>
        <end position="179"/>
    </location>
</feature>
<feature type="region of interest" description="Disordered" evidence="2">
    <location>
        <begin position="18"/>
        <end position="57"/>
    </location>
</feature>
<feature type="compositionally biased region" description="Polar residues" evidence="2">
    <location>
        <begin position="34"/>
        <end position="57"/>
    </location>
</feature>
<accession>B1I726</accession>
<dbReference type="EMBL" id="CP000936">
    <property type="protein sequence ID" value="ACA37102.1"/>
    <property type="molecule type" value="Genomic_DNA"/>
</dbReference>
<dbReference type="RefSeq" id="WP_000053390.1">
    <property type="nucleotide sequence ID" value="NC_010380.1"/>
</dbReference>
<dbReference type="SMR" id="B1I726"/>
<dbReference type="KEGG" id="spv:SPH_1772"/>
<dbReference type="HOGENOM" id="CLU_078499_2_0_9"/>
<dbReference type="Proteomes" id="UP000002163">
    <property type="component" value="Chromosome"/>
</dbReference>
<dbReference type="GO" id="GO:0005737">
    <property type="term" value="C:cytoplasm"/>
    <property type="evidence" value="ECO:0007669"/>
    <property type="project" value="UniProtKB-SubCell"/>
</dbReference>
<dbReference type="GO" id="GO:0000917">
    <property type="term" value="P:division septum assembly"/>
    <property type="evidence" value="ECO:0007669"/>
    <property type="project" value="UniProtKB-KW"/>
</dbReference>
<dbReference type="GO" id="GO:0043093">
    <property type="term" value="P:FtsZ-dependent cytokinesis"/>
    <property type="evidence" value="ECO:0007669"/>
    <property type="project" value="UniProtKB-UniRule"/>
</dbReference>
<dbReference type="Gene3D" id="3.30.110.150">
    <property type="entry name" value="SepF-like protein"/>
    <property type="match status" value="1"/>
</dbReference>
<dbReference type="HAMAP" id="MF_01197">
    <property type="entry name" value="SepF"/>
    <property type="match status" value="1"/>
</dbReference>
<dbReference type="InterPro" id="IPR023052">
    <property type="entry name" value="Cell_div_SepF"/>
</dbReference>
<dbReference type="InterPro" id="IPR007561">
    <property type="entry name" value="Cell_div_SepF/SepF-rel"/>
</dbReference>
<dbReference type="InterPro" id="IPR038594">
    <property type="entry name" value="SepF-like_sf"/>
</dbReference>
<dbReference type="PANTHER" id="PTHR35798">
    <property type="entry name" value="CELL DIVISION PROTEIN SEPF"/>
    <property type="match status" value="1"/>
</dbReference>
<dbReference type="PANTHER" id="PTHR35798:SF1">
    <property type="entry name" value="CELL DIVISION PROTEIN SEPF"/>
    <property type="match status" value="1"/>
</dbReference>
<dbReference type="Pfam" id="PF04472">
    <property type="entry name" value="SepF"/>
    <property type="match status" value="1"/>
</dbReference>
<organism>
    <name type="scientific">Streptococcus pneumoniae (strain Hungary19A-6)</name>
    <dbReference type="NCBI Taxonomy" id="487214"/>
    <lineage>
        <taxon>Bacteria</taxon>
        <taxon>Bacillati</taxon>
        <taxon>Bacillota</taxon>
        <taxon>Bacilli</taxon>
        <taxon>Lactobacillales</taxon>
        <taxon>Streptococcaceae</taxon>
        <taxon>Streptococcus</taxon>
    </lineage>
</organism>
<name>SEPF_STRPI</name>
<reference key="1">
    <citation type="journal article" date="2010" name="Genome Biol.">
        <title>Structure and dynamics of the pan-genome of Streptococcus pneumoniae and closely related species.</title>
        <authorList>
            <person name="Donati C."/>
            <person name="Hiller N.L."/>
            <person name="Tettelin H."/>
            <person name="Muzzi A."/>
            <person name="Croucher N.J."/>
            <person name="Angiuoli S.V."/>
            <person name="Oggioni M."/>
            <person name="Dunning Hotopp J.C."/>
            <person name="Hu F.Z."/>
            <person name="Riley D.R."/>
            <person name="Covacci A."/>
            <person name="Mitchell T.J."/>
            <person name="Bentley S.D."/>
            <person name="Kilian M."/>
            <person name="Ehrlich G.D."/>
            <person name="Rappuoli R."/>
            <person name="Moxon E.R."/>
            <person name="Masignani V."/>
        </authorList>
    </citation>
    <scope>NUCLEOTIDE SEQUENCE [LARGE SCALE GENOMIC DNA]</scope>
    <source>
        <strain>Hungary19A-6</strain>
    </source>
</reference>
<sequence>MSLKDRFDRFIDYFTEDEDSTVPYEKGNEPVFTPVNSSQEPDLPMNQPSQSAGAKDSNITRLHARQQELANQSQRSTDKVIIDVRYPRKYEDATEIVDLLAGNESILIDFQYMTEVQARRCLDYLDGACHVLAGNLKKVASTMYLLTPVNVIVNVEDIRLPDEEQNGEFGFDMKRNRVR</sequence>
<protein>
    <recommendedName>
        <fullName evidence="1">Cell division protein SepF</fullName>
    </recommendedName>
</protein>
<proteinExistence type="inferred from homology"/>
<comment type="function">
    <text evidence="1">Cell division protein that is part of the divisome complex and is recruited early to the Z-ring. Probably stimulates Z-ring formation, perhaps through the cross-linking of FtsZ protofilaments. Its function overlaps with FtsA.</text>
</comment>
<comment type="subunit">
    <text evidence="1">Homodimer. Interacts with FtsZ.</text>
</comment>
<comment type="subcellular location">
    <subcellularLocation>
        <location evidence="1">Cytoplasm</location>
    </subcellularLocation>
    <text evidence="1">Localizes to the division site, in a FtsZ-dependent manner.</text>
</comment>
<comment type="similarity">
    <text evidence="1">Belongs to the SepF family.</text>
</comment>